<feature type="chain" id="PRO_0000193113" description="Long-chain-fatty-acid--CoA ligase 5">
    <location>
        <begin position="1"/>
        <end position="683"/>
    </location>
</feature>
<feature type="transmembrane region" description="Helical; Signal-anchor for type III membrane protein" evidence="4">
    <location>
        <begin position="12"/>
        <end position="32"/>
    </location>
</feature>
<feature type="topological domain" description="Cytoplasmic" evidence="4">
    <location>
        <begin position="33"/>
        <end position="683"/>
    </location>
</feature>
<feature type="modified residue" description="N6-acetyllysine" evidence="7">
    <location>
        <position position="361"/>
    </location>
</feature>
<evidence type="ECO:0000250" key="1"/>
<evidence type="ECO:0000250" key="2">
    <source>
        <dbReference type="UniProtKB" id="O88813"/>
    </source>
</evidence>
<evidence type="ECO:0000250" key="3">
    <source>
        <dbReference type="UniProtKB" id="Q9ULC5"/>
    </source>
</evidence>
<evidence type="ECO:0000255" key="4"/>
<evidence type="ECO:0000305" key="5"/>
<evidence type="ECO:0000312" key="6">
    <source>
        <dbReference type="MGI" id="MGI:1919129"/>
    </source>
</evidence>
<evidence type="ECO:0007744" key="7">
    <source>
    </source>
</evidence>
<sequence length="683" mass="76206">MLFIFNFLFSPLPTPALICLLTFGTAIFLWLINRPQPVLPLIDLDNQSVGIEGGARRGAFQKNNDLILYYFSDAKTLYENFQRGLAVSDNGPCLGYRKPNQPYKWISYKQVSDRAEYLGSCLLHKGYKSSQDQFVGIFAQNRPEWVISELACYTYSMVAVPLYDTLGTEAIIFVINRADIPVVICDTPQKATMLVENVEKGLTPGLKTIILMDPFDDDLMKRGEKCGVEMLSLHDAENIGKENFKKPVPPKPEDLSVICFTSGTTGDPKGAMLTHENVVSNMAAFLKFLEPIFQPTSDDVTISYLPLAHMFERLVQGILFSCGGKIGFFQGDIRLLPDDMKALKPTVFPTVPRLLNRVYDKVQNEAKTPLKKFLLNLAIISKFNEVKNGIIRRDSLWDKLVFSKIQGSLGGKVRLMITGAAPISTPVLTFFRAAMGCWVFEAYGQTECTGGCSITSPGDWTAGHVGTPVACNFVKLEDVADMNYFSVNNEGEICIKGNNVFKGYLKDPEKTQEVLDKDGWLHTGDIGRWLPNGTLKIVDRKKNIFKLAQGEYIAPEKIENVYSRSRPVLQVFVHGESLRSFLIGVVVPDPDSLPSFAAKIGVKGSFEELCKNQCVKEAILEDLQKIGKEGGLKSFEQVKSIFVHPEPFTIENGLLTPTLKAKRVELAKFFQTQIKSLYESIEE</sequence>
<organism>
    <name type="scientific">Mus musculus</name>
    <name type="common">Mouse</name>
    <dbReference type="NCBI Taxonomy" id="10090"/>
    <lineage>
        <taxon>Eukaryota</taxon>
        <taxon>Metazoa</taxon>
        <taxon>Chordata</taxon>
        <taxon>Craniata</taxon>
        <taxon>Vertebrata</taxon>
        <taxon>Euteleostomi</taxon>
        <taxon>Mammalia</taxon>
        <taxon>Eutheria</taxon>
        <taxon>Euarchontoglires</taxon>
        <taxon>Glires</taxon>
        <taxon>Rodentia</taxon>
        <taxon>Myomorpha</taxon>
        <taxon>Muroidea</taxon>
        <taxon>Muridae</taxon>
        <taxon>Murinae</taxon>
        <taxon>Mus</taxon>
        <taxon>Mus</taxon>
    </lineage>
</organism>
<proteinExistence type="evidence at protein level"/>
<reference key="1">
    <citation type="journal article" date="2004" name="Genome Res.">
        <title>The status, quality, and expansion of the NIH full-length cDNA project: the Mammalian Gene Collection (MGC).</title>
        <authorList>
            <consortium name="The MGC Project Team"/>
        </authorList>
    </citation>
    <scope>NUCLEOTIDE SEQUENCE [LARGE SCALE MRNA]</scope>
    <source>
        <tissue>Mammary tumor</tissue>
    </source>
</reference>
<reference key="2">
    <citation type="journal article" date="2010" name="Cell">
        <title>A tissue-specific atlas of mouse protein phosphorylation and expression.</title>
        <authorList>
            <person name="Huttlin E.L."/>
            <person name="Jedrychowski M.P."/>
            <person name="Elias J.E."/>
            <person name="Goswami T."/>
            <person name="Rad R."/>
            <person name="Beausoleil S.A."/>
            <person name="Villen J."/>
            <person name="Haas W."/>
            <person name="Sowa M.E."/>
            <person name="Gygi S.P."/>
        </authorList>
    </citation>
    <scope>IDENTIFICATION BY MASS SPECTROMETRY [LARGE SCALE ANALYSIS]</scope>
    <source>
        <tissue>Brown adipose tissue</tissue>
        <tissue>Kidney</tissue>
        <tissue>Liver</tissue>
        <tissue>Lung</tissue>
        <tissue>Pancreas</tissue>
        <tissue>Spleen</tissue>
    </source>
</reference>
<reference key="3">
    <citation type="journal article" date="2013" name="Proc. Natl. Acad. Sci. U.S.A.">
        <title>Label-free quantitative proteomics of the lysine acetylome in mitochondria identifies substrates of SIRT3 in metabolic pathways.</title>
        <authorList>
            <person name="Rardin M.J."/>
            <person name="Newman J.C."/>
            <person name="Held J.M."/>
            <person name="Cusack M.P."/>
            <person name="Sorensen D.J."/>
            <person name="Li B."/>
            <person name="Schilling B."/>
            <person name="Mooney S.D."/>
            <person name="Kahn C.R."/>
            <person name="Verdin E."/>
            <person name="Gibson B.W."/>
        </authorList>
    </citation>
    <scope>ACETYLATION [LARGE SCALE ANALYSIS] AT LYS-361</scope>
    <scope>IDENTIFICATION BY MASS SPECTROMETRY [LARGE SCALE ANALYSIS]</scope>
    <source>
        <tissue>Liver</tissue>
    </source>
</reference>
<protein>
    <recommendedName>
        <fullName evidence="5">Long-chain-fatty-acid--CoA ligase 5</fullName>
        <ecNumber evidence="2">6.2.1.3</ecNumber>
    </recommendedName>
    <alternativeName>
        <fullName evidence="5">Arachidonate--CoA ligase</fullName>
        <ecNumber evidence="2">6.2.1.15</ecNumber>
    </alternativeName>
    <alternativeName>
        <fullName>Long-chain acyl-CoA synthetase 5</fullName>
        <shortName>LACS 5</shortName>
    </alternativeName>
</protein>
<keyword id="KW-0007">Acetylation</keyword>
<keyword id="KW-0067">ATP-binding</keyword>
<keyword id="KW-1003">Cell membrane</keyword>
<keyword id="KW-0256">Endoplasmic reticulum</keyword>
<keyword id="KW-0276">Fatty acid metabolism</keyword>
<keyword id="KW-0436">Ligase</keyword>
<keyword id="KW-0443">Lipid metabolism</keyword>
<keyword id="KW-0460">Magnesium</keyword>
<keyword id="KW-0472">Membrane</keyword>
<keyword id="KW-0496">Mitochondrion</keyword>
<keyword id="KW-1000">Mitochondrion outer membrane</keyword>
<keyword id="KW-0547">Nucleotide-binding</keyword>
<keyword id="KW-1185">Reference proteome</keyword>
<keyword id="KW-0735">Signal-anchor</keyword>
<keyword id="KW-0812">Transmembrane</keyword>
<keyword id="KW-1133">Transmembrane helix</keyword>
<name>ACSL5_MOUSE</name>
<gene>
    <name evidence="6" type="primary">Acsl5</name>
    <name type="synonym">Facl5</name>
</gene>
<dbReference type="EC" id="6.2.1.3" evidence="2"/>
<dbReference type="EC" id="6.2.1.15" evidence="2"/>
<dbReference type="EMBL" id="BC031544">
    <property type="protein sequence ID" value="AAH31544.1"/>
    <property type="molecule type" value="mRNA"/>
</dbReference>
<dbReference type="CCDS" id="CCDS29908.1"/>
<dbReference type="PIR" id="S49487">
    <property type="entry name" value="S49487"/>
</dbReference>
<dbReference type="RefSeq" id="NP_082252.1">
    <property type="nucleotide sequence ID" value="NM_027976.2"/>
</dbReference>
<dbReference type="RefSeq" id="XP_006527241.1">
    <property type="nucleotide sequence ID" value="XM_006527178.4"/>
</dbReference>
<dbReference type="SMR" id="Q8JZR0"/>
<dbReference type="BioGRID" id="241124">
    <property type="interactions" value="8"/>
</dbReference>
<dbReference type="FunCoup" id="Q8JZR0">
    <property type="interactions" value="848"/>
</dbReference>
<dbReference type="STRING" id="10090.ENSMUSP00000046585"/>
<dbReference type="GlyGen" id="Q8JZR0">
    <property type="glycosylation" value="3 sites, 1 O-linked glycan (1 site)"/>
</dbReference>
<dbReference type="iPTMnet" id="Q8JZR0"/>
<dbReference type="PhosphoSitePlus" id="Q8JZR0"/>
<dbReference type="SwissPalm" id="Q8JZR0"/>
<dbReference type="jPOST" id="Q8JZR0"/>
<dbReference type="PaxDb" id="10090-ENSMUSP00000046585"/>
<dbReference type="ProteomicsDB" id="285660"/>
<dbReference type="Pumba" id="Q8JZR0"/>
<dbReference type="Antibodypedia" id="31809">
    <property type="antibodies" value="279 antibodies from 33 providers"/>
</dbReference>
<dbReference type="DNASU" id="433256"/>
<dbReference type="Ensembl" id="ENSMUST00000043150.6">
    <property type="protein sequence ID" value="ENSMUSP00000046585.5"/>
    <property type="gene ID" value="ENSMUSG00000024981.7"/>
</dbReference>
<dbReference type="GeneID" id="433256"/>
<dbReference type="KEGG" id="mmu:433256"/>
<dbReference type="UCSC" id="uc008hxp.1">
    <property type="organism name" value="mouse"/>
</dbReference>
<dbReference type="AGR" id="MGI:1919129"/>
<dbReference type="CTD" id="51703"/>
<dbReference type="MGI" id="MGI:1919129">
    <property type="gene designation" value="Acsl5"/>
</dbReference>
<dbReference type="VEuPathDB" id="HostDB:ENSMUSG00000024981"/>
<dbReference type="eggNOG" id="KOG1256">
    <property type="taxonomic scope" value="Eukaryota"/>
</dbReference>
<dbReference type="GeneTree" id="ENSGT00940000156651"/>
<dbReference type="HOGENOM" id="CLU_000022_45_4_1"/>
<dbReference type="InParanoid" id="Q8JZR0"/>
<dbReference type="OMA" id="IWHSYER"/>
<dbReference type="OrthoDB" id="1700726at2759"/>
<dbReference type="PhylomeDB" id="Q8JZR0"/>
<dbReference type="TreeFam" id="TF313877"/>
<dbReference type="BRENDA" id="6.2.1.3">
    <property type="organism ID" value="3474"/>
</dbReference>
<dbReference type="Reactome" id="R-MMU-75876">
    <property type="pathway name" value="Synthesis of very long-chain fatty acyl-CoAs"/>
</dbReference>
<dbReference type="BioGRID-ORCS" id="433256">
    <property type="hits" value="4 hits in 80 CRISPR screens"/>
</dbReference>
<dbReference type="ChiTaRS" id="Acsl5">
    <property type="organism name" value="mouse"/>
</dbReference>
<dbReference type="PRO" id="PR:Q8JZR0"/>
<dbReference type="Proteomes" id="UP000000589">
    <property type="component" value="Chromosome 19"/>
</dbReference>
<dbReference type="RNAct" id="Q8JZR0">
    <property type="molecule type" value="protein"/>
</dbReference>
<dbReference type="Bgee" id="ENSMUSG00000024981">
    <property type="expression patterns" value="Expressed in small intestine Peyer's patch and 296 other cell types or tissues"/>
</dbReference>
<dbReference type="ExpressionAtlas" id="Q8JZR0">
    <property type="expression patterns" value="baseline and differential"/>
</dbReference>
<dbReference type="GO" id="GO:0005783">
    <property type="term" value="C:endoplasmic reticulum"/>
    <property type="evidence" value="ECO:0000250"/>
    <property type="project" value="UniProtKB"/>
</dbReference>
<dbReference type="GO" id="GO:0005789">
    <property type="term" value="C:endoplasmic reticulum membrane"/>
    <property type="evidence" value="ECO:0007669"/>
    <property type="project" value="UniProtKB-SubCell"/>
</dbReference>
<dbReference type="GO" id="GO:0005743">
    <property type="term" value="C:mitochondrial inner membrane"/>
    <property type="evidence" value="ECO:0007005"/>
    <property type="project" value="MGI"/>
</dbReference>
<dbReference type="GO" id="GO:0005741">
    <property type="term" value="C:mitochondrial outer membrane"/>
    <property type="evidence" value="ECO:0007669"/>
    <property type="project" value="UniProtKB-SubCell"/>
</dbReference>
<dbReference type="GO" id="GO:0005739">
    <property type="term" value="C:mitochondrion"/>
    <property type="evidence" value="ECO:0007005"/>
    <property type="project" value="MGI"/>
</dbReference>
<dbReference type="GO" id="GO:0005730">
    <property type="term" value="C:nucleolus"/>
    <property type="evidence" value="ECO:0007669"/>
    <property type="project" value="Ensembl"/>
</dbReference>
<dbReference type="GO" id="GO:0005654">
    <property type="term" value="C:nucleoplasm"/>
    <property type="evidence" value="ECO:0007669"/>
    <property type="project" value="Ensembl"/>
</dbReference>
<dbReference type="GO" id="GO:0005886">
    <property type="term" value="C:plasma membrane"/>
    <property type="evidence" value="ECO:0000250"/>
    <property type="project" value="UniProtKB"/>
</dbReference>
<dbReference type="GO" id="GO:0047676">
    <property type="term" value="F:arachidonate-CoA ligase activity"/>
    <property type="evidence" value="ECO:0000250"/>
    <property type="project" value="UniProtKB"/>
</dbReference>
<dbReference type="GO" id="GO:0005524">
    <property type="term" value="F:ATP binding"/>
    <property type="evidence" value="ECO:0007669"/>
    <property type="project" value="UniProtKB-KW"/>
</dbReference>
<dbReference type="GO" id="GO:0004467">
    <property type="term" value="F:long-chain fatty acid-CoA ligase activity"/>
    <property type="evidence" value="ECO:0000315"/>
    <property type="project" value="UniProtKB"/>
</dbReference>
<dbReference type="GO" id="GO:0090434">
    <property type="term" value="F:oleoyl-CoA ligase activity"/>
    <property type="evidence" value="ECO:0000250"/>
    <property type="project" value="UniProtKB"/>
</dbReference>
<dbReference type="GO" id="GO:0001676">
    <property type="term" value="P:long-chain fatty acid metabolic process"/>
    <property type="evidence" value="ECO:0000315"/>
    <property type="project" value="UniProtKB"/>
</dbReference>
<dbReference type="CDD" id="cd05927">
    <property type="entry name" value="LC-FACS_euk"/>
    <property type="match status" value="1"/>
</dbReference>
<dbReference type="Gene3D" id="3.40.50.12780">
    <property type="entry name" value="N-terminal domain of ligase-like"/>
    <property type="match status" value="1"/>
</dbReference>
<dbReference type="InterPro" id="IPR020845">
    <property type="entry name" value="AMP-binding_CS"/>
</dbReference>
<dbReference type="InterPro" id="IPR000873">
    <property type="entry name" value="AMP-dep_synth/lig_dom"/>
</dbReference>
<dbReference type="InterPro" id="IPR042099">
    <property type="entry name" value="ANL_N_sf"/>
</dbReference>
<dbReference type="InterPro" id="IPR045311">
    <property type="entry name" value="LC-FACS_euk"/>
</dbReference>
<dbReference type="PANTHER" id="PTHR43272">
    <property type="entry name" value="LONG-CHAIN-FATTY-ACID--COA LIGASE"/>
    <property type="match status" value="1"/>
</dbReference>
<dbReference type="PANTHER" id="PTHR43272:SF107">
    <property type="entry name" value="LONG-CHAIN-FATTY-ACID--COA LIGASE 5"/>
    <property type="match status" value="1"/>
</dbReference>
<dbReference type="Pfam" id="PF00501">
    <property type="entry name" value="AMP-binding"/>
    <property type="match status" value="1"/>
</dbReference>
<dbReference type="SUPFAM" id="SSF56801">
    <property type="entry name" value="Acetyl-CoA synthetase-like"/>
    <property type="match status" value="1"/>
</dbReference>
<dbReference type="PROSITE" id="PS00455">
    <property type="entry name" value="AMP_BINDING"/>
    <property type="match status" value="1"/>
</dbReference>
<comment type="function">
    <text evidence="1 2">Catalyzes the conversion of long-chain fatty acids to their active form acyl-CoAs for both synthesis of cellular lipids, and degradation via beta-oxidation (By similarity). ACSL5 may activate fatty acids from exogenous sources for the synthesis of triacylglycerol destined for intracellular storage (By similarity). It was suggested that it may also stimulate fatty acid oxidation (By similarity). At the villus tip of the crypt-villus axis of the small intestine may sensitize epithelial cells to apoptosis specifically triggered by the death ligand TRAIL (By similarity). May have a role in the survival of glioma cells (By similarity). Utilizes a wide range of saturated fatty acids with a preference for C16-C18 unsaturated fatty acids (By similarity).</text>
</comment>
<comment type="catalytic activity">
    <reaction evidence="3">
        <text>a long-chain fatty acid + ATP + CoA = a long-chain fatty acyl-CoA + AMP + diphosphate</text>
        <dbReference type="Rhea" id="RHEA:15421"/>
        <dbReference type="ChEBI" id="CHEBI:30616"/>
        <dbReference type="ChEBI" id="CHEBI:33019"/>
        <dbReference type="ChEBI" id="CHEBI:57287"/>
        <dbReference type="ChEBI" id="CHEBI:57560"/>
        <dbReference type="ChEBI" id="CHEBI:83139"/>
        <dbReference type="ChEBI" id="CHEBI:456215"/>
        <dbReference type="EC" id="6.2.1.3"/>
    </reaction>
    <physiologicalReaction direction="left-to-right" evidence="3">
        <dbReference type="Rhea" id="RHEA:15422"/>
    </physiologicalReaction>
</comment>
<comment type="catalytic activity">
    <reaction evidence="2">
        <text>(5Z,8Z,11Z,14Z)-eicosatetraenoate + ATP + CoA = (5Z,8Z,11Z,14Z)-eicosatetraenoyl-CoA + AMP + diphosphate</text>
        <dbReference type="Rhea" id="RHEA:19713"/>
        <dbReference type="ChEBI" id="CHEBI:30616"/>
        <dbReference type="ChEBI" id="CHEBI:32395"/>
        <dbReference type="ChEBI" id="CHEBI:33019"/>
        <dbReference type="ChEBI" id="CHEBI:57287"/>
        <dbReference type="ChEBI" id="CHEBI:57368"/>
        <dbReference type="ChEBI" id="CHEBI:456215"/>
        <dbReference type="EC" id="6.2.1.15"/>
    </reaction>
    <physiologicalReaction direction="left-to-right" evidence="2">
        <dbReference type="Rhea" id="RHEA:19714"/>
    </physiologicalReaction>
</comment>
<comment type="catalytic activity">
    <reaction evidence="3">
        <text>hexadecanoate + ATP + CoA = hexadecanoyl-CoA + AMP + diphosphate</text>
        <dbReference type="Rhea" id="RHEA:30751"/>
        <dbReference type="ChEBI" id="CHEBI:7896"/>
        <dbReference type="ChEBI" id="CHEBI:30616"/>
        <dbReference type="ChEBI" id="CHEBI:33019"/>
        <dbReference type="ChEBI" id="CHEBI:57287"/>
        <dbReference type="ChEBI" id="CHEBI:57379"/>
        <dbReference type="ChEBI" id="CHEBI:456215"/>
    </reaction>
    <physiologicalReaction direction="left-to-right" evidence="3">
        <dbReference type="Rhea" id="RHEA:30752"/>
    </physiologicalReaction>
</comment>
<comment type="catalytic activity">
    <reaction evidence="3">
        <text>(E)-hexadec-2-enoate + ATP + CoA = (2E)-hexadecenoyl-CoA + AMP + diphosphate</text>
        <dbReference type="Rhea" id="RHEA:36139"/>
        <dbReference type="ChEBI" id="CHEBI:30616"/>
        <dbReference type="ChEBI" id="CHEBI:33019"/>
        <dbReference type="ChEBI" id="CHEBI:57287"/>
        <dbReference type="ChEBI" id="CHEBI:61526"/>
        <dbReference type="ChEBI" id="CHEBI:72745"/>
        <dbReference type="ChEBI" id="CHEBI:456215"/>
    </reaction>
    <physiologicalReaction direction="left-to-right" evidence="3">
        <dbReference type="Rhea" id="RHEA:36140"/>
    </physiologicalReaction>
</comment>
<comment type="catalytic activity">
    <reaction evidence="2">
        <text>15-hydroxy-(5Z,8Z,11Z,13E)-eicosatetraenoate + ATP + CoA = 15-hydroxy-(5Z,8Z,11Z,13E)-eicosatetraenoyl-CoA + AMP + diphosphate</text>
        <dbReference type="Rhea" id="RHEA:52116"/>
        <dbReference type="ChEBI" id="CHEBI:30616"/>
        <dbReference type="ChEBI" id="CHEBI:33019"/>
        <dbReference type="ChEBI" id="CHEBI:57287"/>
        <dbReference type="ChEBI" id="CHEBI:78832"/>
        <dbReference type="ChEBI" id="CHEBI:136409"/>
        <dbReference type="ChEBI" id="CHEBI:456215"/>
    </reaction>
    <physiologicalReaction direction="left-to-right" evidence="2">
        <dbReference type="Rhea" id="RHEA:52117"/>
    </physiologicalReaction>
</comment>
<comment type="catalytic activity">
    <reaction evidence="2">
        <text>12-hydroxy-(5Z,8Z,10E,14Z)-eicosatetraenoate + ATP + CoA = 12-hydroxy-(5Z,8Z,10E,14Z)-eicosatetraenoyl-CoA + AMP + diphosphate</text>
        <dbReference type="Rhea" id="RHEA:52112"/>
        <dbReference type="ChEBI" id="CHEBI:30616"/>
        <dbReference type="ChEBI" id="CHEBI:33019"/>
        <dbReference type="ChEBI" id="CHEBI:57287"/>
        <dbReference type="ChEBI" id="CHEBI:90718"/>
        <dbReference type="ChEBI" id="CHEBI:136408"/>
        <dbReference type="ChEBI" id="CHEBI:456215"/>
    </reaction>
    <physiologicalReaction direction="left-to-right" evidence="2">
        <dbReference type="Rhea" id="RHEA:52113"/>
    </physiologicalReaction>
</comment>
<comment type="catalytic activity">
    <reaction evidence="2">
        <text>5-hydroxy-(6E,8Z,11Z,14Z)-eicosatetraenoate + ATP + CoA = 5-hydroxy-(6E,8Z,11Z,14Z)-eicosatetraenoyl-CoA + AMP + diphosphate</text>
        <dbReference type="Rhea" id="RHEA:52108"/>
        <dbReference type="ChEBI" id="CHEBI:30616"/>
        <dbReference type="ChEBI" id="CHEBI:33019"/>
        <dbReference type="ChEBI" id="CHEBI:57287"/>
        <dbReference type="ChEBI" id="CHEBI:65341"/>
        <dbReference type="ChEBI" id="CHEBI:136407"/>
        <dbReference type="ChEBI" id="CHEBI:456215"/>
    </reaction>
    <physiologicalReaction direction="left-to-right" evidence="2">
        <dbReference type="Rhea" id="RHEA:52109"/>
    </physiologicalReaction>
</comment>
<comment type="catalytic activity">
    <reaction evidence="2">
        <text>14,15-epoxy-(5Z,8Z,11Z)-eicosatrienoate + ATP + CoA = 14,15-epoxy-(5Z,8Z,11Z)-eicosatrienoyl-CoA + AMP + diphosphate</text>
        <dbReference type="Rhea" id="RHEA:52016"/>
        <dbReference type="ChEBI" id="CHEBI:30616"/>
        <dbReference type="ChEBI" id="CHEBI:33019"/>
        <dbReference type="ChEBI" id="CHEBI:57287"/>
        <dbReference type="ChEBI" id="CHEBI:84024"/>
        <dbReference type="ChEBI" id="CHEBI:136117"/>
        <dbReference type="ChEBI" id="CHEBI:456215"/>
    </reaction>
    <physiologicalReaction direction="left-to-right" evidence="2">
        <dbReference type="Rhea" id="RHEA:52017"/>
    </physiologicalReaction>
</comment>
<comment type="catalytic activity">
    <reaction evidence="2">
        <text>11,12-epoxy-(5Z,8Z,14Z)-eicosatrienoate + ATP + CoA = 11,12-epoxy-(5Z,8Z,14Z)-eicosatrienoyl-CoA + AMP + diphosphate</text>
        <dbReference type="Rhea" id="RHEA:52012"/>
        <dbReference type="ChEBI" id="CHEBI:30616"/>
        <dbReference type="ChEBI" id="CHEBI:33019"/>
        <dbReference type="ChEBI" id="CHEBI:57287"/>
        <dbReference type="ChEBI" id="CHEBI:76625"/>
        <dbReference type="ChEBI" id="CHEBI:136115"/>
        <dbReference type="ChEBI" id="CHEBI:456215"/>
    </reaction>
    <physiologicalReaction direction="left-to-right" evidence="2">
        <dbReference type="Rhea" id="RHEA:52013"/>
    </physiologicalReaction>
</comment>
<comment type="catalytic activity">
    <reaction evidence="3">
        <text>(9Z)-octadecenoate + ATP + CoA = (9Z)-octadecenoyl-CoA + AMP + diphosphate</text>
        <dbReference type="Rhea" id="RHEA:33607"/>
        <dbReference type="ChEBI" id="CHEBI:30616"/>
        <dbReference type="ChEBI" id="CHEBI:30823"/>
        <dbReference type="ChEBI" id="CHEBI:33019"/>
        <dbReference type="ChEBI" id="CHEBI:57287"/>
        <dbReference type="ChEBI" id="CHEBI:57387"/>
        <dbReference type="ChEBI" id="CHEBI:456215"/>
    </reaction>
    <physiologicalReaction direction="left-to-right" evidence="3">
        <dbReference type="Rhea" id="RHEA:33608"/>
    </physiologicalReaction>
</comment>
<comment type="subcellular location">
    <subcellularLocation>
        <location evidence="3">Mitochondrion</location>
    </subcellularLocation>
    <subcellularLocation>
        <location evidence="3">Endoplasmic reticulum</location>
    </subcellularLocation>
    <subcellularLocation>
        <location evidence="1">Mitochondrion outer membrane</location>
        <topology evidence="1">Single-pass type III membrane protein</topology>
    </subcellularLocation>
    <subcellularLocation>
        <location evidence="1">Endoplasmic reticulum membrane</location>
        <topology evidence="1">Single-pass type III membrane protein</topology>
    </subcellularLocation>
    <subcellularLocation>
        <location evidence="3">Cell membrane</location>
    </subcellularLocation>
</comment>
<comment type="similarity">
    <text evidence="5">Belongs to the ATP-dependent AMP-binding enzyme family.</text>
</comment>
<accession>Q8JZR0</accession>